<keyword id="KW-0963">Cytoplasm</keyword>
<keyword id="KW-0324">Glycolysis</keyword>
<keyword id="KW-0520">NAD</keyword>
<keyword id="KW-0547">Nucleotide-binding</keyword>
<keyword id="KW-0560">Oxidoreductase</keyword>
<reference key="1">
    <citation type="journal article" date="1993" name="Proc. Natl. Acad. Sci. U.S.A.">
        <title>Evidence for a chimeric nature of nuclear genomes: eubacterial origin of eukaryotic glyceraldehyde-3-phosphate dehydrogenase genes.</title>
        <authorList>
            <person name="Martin W."/>
            <person name="Brinkmann H."/>
            <person name="Savona C."/>
            <person name="Cerff R."/>
        </authorList>
    </citation>
    <scope>NUCLEOTIDE SEQUENCE [GENOMIC DNA]</scope>
</reference>
<reference key="2">
    <citation type="journal article" date="2014" name="Stand. Genomic Sci.">
        <title>Complete genome sequence of Anabaena variabilis ATCC 29413.</title>
        <authorList>
            <person name="Thiel T."/>
            <person name="Pratte B.S."/>
            <person name="Zhong J."/>
            <person name="Goodwin L."/>
            <person name="Copeland A."/>
            <person name="Lucas S."/>
            <person name="Han C."/>
            <person name="Pitluck S."/>
            <person name="Land M.L."/>
            <person name="Kyrpides N.C."/>
            <person name="Woyke T."/>
        </authorList>
    </citation>
    <scope>NUCLEOTIDE SEQUENCE [LARGE SCALE GENOMIC DNA]</scope>
    <source>
        <strain>ATCC 29413 / PCC 7937</strain>
    </source>
</reference>
<gene>
    <name type="primary">gap1</name>
    <name type="ordered locus">Ava_0495</name>
</gene>
<proteinExistence type="inferred from homology"/>
<organism>
    <name type="scientific">Trichormus variabilis (strain ATCC 29413 / PCC 7937)</name>
    <name type="common">Anabaena variabilis</name>
    <dbReference type="NCBI Taxonomy" id="240292"/>
    <lineage>
        <taxon>Bacteria</taxon>
        <taxon>Bacillati</taxon>
        <taxon>Cyanobacteriota</taxon>
        <taxon>Cyanophyceae</taxon>
        <taxon>Nostocales</taxon>
        <taxon>Nostocaceae</taxon>
        <taxon>Trichormus</taxon>
    </lineage>
</organism>
<protein>
    <recommendedName>
        <fullName evidence="4">Glyceraldehyde-3-phosphate dehydrogenase 1</fullName>
        <shortName evidence="4">GAPDH 1</shortName>
        <ecNumber evidence="3">1.2.1.12</ecNumber>
    </recommendedName>
    <alternativeName>
        <fullName evidence="4">NAD-dependent glyceraldehyde-3-phosphate dehydrogenase</fullName>
    </alternativeName>
</protein>
<evidence type="ECO:0000250" key="1"/>
<evidence type="ECO:0000250" key="2">
    <source>
        <dbReference type="UniProtKB" id="P00362"/>
    </source>
</evidence>
<evidence type="ECO:0000250" key="3">
    <source>
        <dbReference type="UniProtKB" id="P09124"/>
    </source>
</evidence>
<evidence type="ECO:0000250" key="4">
    <source>
        <dbReference type="UniProtKB" id="P80506"/>
    </source>
</evidence>
<evidence type="ECO:0000250" key="5">
    <source>
        <dbReference type="UniProtKB" id="Q6GIL8"/>
    </source>
</evidence>
<evidence type="ECO:0000305" key="6"/>
<name>G3P1_TRIV2</name>
<dbReference type="EC" id="1.2.1.12" evidence="3"/>
<dbReference type="EMBL" id="L07497">
    <property type="protein sequence ID" value="AAA21995.2"/>
    <property type="molecule type" value="Genomic_DNA"/>
</dbReference>
<dbReference type="EMBL" id="CP000117">
    <property type="protein sequence ID" value="ABA20119.1"/>
    <property type="molecule type" value="Genomic_DNA"/>
</dbReference>
<dbReference type="PIR" id="I39602">
    <property type="entry name" value="I39602"/>
</dbReference>
<dbReference type="SMR" id="P34916"/>
<dbReference type="STRING" id="240292.Ava_0495"/>
<dbReference type="KEGG" id="ava:Ava_0495"/>
<dbReference type="eggNOG" id="COG0057">
    <property type="taxonomic scope" value="Bacteria"/>
</dbReference>
<dbReference type="HOGENOM" id="CLU_030140_0_3_3"/>
<dbReference type="UniPathway" id="UPA00109">
    <property type="reaction ID" value="UER00184"/>
</dbReference>
<dbReference type="Proteomes" id="UP000002533">
    <property type="component" value="Chromosome"/>
</dbReference>
<dbReference type="GO" id="GO:0005737">
    <property type="term" value="C:cytoplasm"/>
    <property type="evidence" value="ECO:0007669"/>
    <property type="project" value="UniProtKB-SubCell"/>
</dbReference>
<dbReference type="GO" id="GO:0004365">
    <property type="term" value="F:glyceraldehyde-3-phosphate dehydrogenase (NAD+) (phosphorylating) activity"/>
    <property type="evidence" value="ECO:0000250"/>
    <property type="project" value="UniProtKB"/>
</dbReference>
<dbReference type="GO" id="GO:0051287">
    <property type="term" value="F:NAD binding"/>
    <property type="evidence" value="ECO:0000250"/>
    <property type="project" value="UniProtKB"/>
</dbReference>
<dbReference type="GO" id="GO:0050661">
    <property type="term" value="F:NADP binding"/>
    <property type="evidence" value="ECO:0007669"/>
    <property type="project" value="InterPro"/>
</dbReference>
<dbReference type="GO" id="GO:0006006">
    <property type="term" value="P:glucose metabolic process"/>
    <property type="evidence" value="ECO:0007669"/>
    <property type="project" value="InterPro"/>
</dbReference>
<dbReference type="GO" id="GO:0006096">
    <property type="term" value="P:glycolytic process"/>
    <property type="evidence" value="ECO:0007669"/>
    <property type="project" value="UniProtKB-UniPathway"/>
</dbReference>
<dbReference type="CDD" id="cd18126">
    <property type="entry name" value="GAPDH_I_C"/>
    <property type="match status" value="1"/>
</dbReference>
<dbReference type="CDD" id="cd05214">
    <property type="entry name" value="GAPDH_I_N"/>
    <property type="match status" value="1"/>
</dbReference>
<dbReference type="FunFam" id="3.30.360.10:FF:000001">
    <property type="entry name" value="Glyceraldehyde-3-phosphate dehydrogenase"/>
    <property type="match status" value="1"/>
</dbReference>
<dbReference type="FunFam" id="3.40.50.720:FF:000001">
    <property type="entry name" value="Glyceraldehyde-3-phosphate dehydrogenase"/>
    <property type="match status" value="1"/>
</dbReference>
<dbReference type="FunFam" id="3.40.50.720:FF:000636">
    <property type="entry name" value="Glyceraldehyde-3-phosphate dehydrogenase 2, cytosolic"/>
    <property type="match status" value="1"/>
</dbReference>
<dbReference type="Gene3D" id="3.30.360.10">
    <property type="entry name" value="Dihydrodipicolinate Reductase, domain 2"/>
    <property type="match status" value="1"/>
</dbReference>
<dbReference type="Gene3D" id="3.40.50.720">
    <property type="entry name" value="NAD(P)-binding Rossmann-like Domain"/>
    <property type="match status" value="1"/>
</dbReference>
<dbReference type="InterPro" id="IPR020831">
    <property type="entry name" value="GlycerAld/Erythrose_P_DH"/>
</dbReference>
<dbReference type="InterPro" id="IPR020830">
    <property type="entry name" value="GlycerAld_3-P_DH_AS"/>
</dbReference>
<dbReference type="InterPro" id="IPR020829">
    <property type="entry name" value="GlycerAld_3-P_DH_cat"/>
</dbReference>
<dbReference type="InterPro" id="IPR020828">
    <property type="entry name" value="GlycerAld_3-P_DH_NAD(P)-bd"/>
</dbReference>
<dbReference type="InterPro" id="IPR006424">
    <property type="entry name" value="Glyceraldehyde-3-P_DH_1"/>
</dbReference>
<dbReference type="InterPro" id="IPR036291">
    <property type="entry name" value="NAD(P)-bd_dom_sf"/>
</dbReference>
<dbReference type="NCBIfam" id="TIGR01534">
    <property type="entry name" value="GAPDH-I"/>
    <property type="match status" value="1"/>
</dbReference>
<dbReference type="PANTHER" id="PTHR10836">
    <property type="entry name" value="GLYCERALDEHYDE 3-PHOSPHATE DEHYDROGENASE"/>
    <property type="match status" value="1"/>
</dbReference>
<dbReference type="PANTHER" id="PTHR10836:SF76">
    <property type="entry name" value="GLYCERALDEHYDE-3-PHOSPHATE DEHYDROGENASE-RELATED"/>
    <property type="match status" value="1"/>
</dbReference>
<dbReference type="Pfam" id="PF02800">
    <property type="entry name" value="Gp_dh_C"/>
    <property type="match status" value="1"/>
</dbReference>
<dbReference type="Pfam" id="PF00044">
    <property type="entry name" value="Gp_dh_N"/>
    <property type="match status" value="1"/>
</dbReference>
<dbReference type="PIRSF" id="PIRSF000149">
    <property type="entry name" value="GAP_DH"/>
    <property type="match status" value="1"/>
</dbReference>
<dbReference type="PRINTS" id="PR00078">
    <property type="entry name" value="G3PDHDRGNASE"/>
</dbReference>
<dbReference type="SMART" id="SM00846">
    <property type="entry name" value="Gp_dh_N"/>
    <property type="match status" value="1"/>
</dbReference>
<dbReference type="SUPFAM" id="SSF55347">
    <property type="entry name" value="Glyceraldehyde-3-phosphate dehydrogenase-like, C-terminal domain"/>
    <property type="match status" value="1"/>
</dbReference>
<dbReference type="SUPFAM" id="SSF51735">
    <property type="entry name" value="NAD(P)-binding Rossmann-fold domains"/>
    <property type="match status" value="1"/>
</dbReference>
<dbReference type="PROSITE" id="PS00071">
    <property type="entry name" value="GAPDH"/>
    <property type="match status" value="1"/>
</dbReference>
<accession>P34916</accession>
<accession>Q3MFW7</accession>
<sequence>MAKLKVGINGFGRIGRLVLRAGINNPNIEFVGINDLVPPDNLAYLLKYDSTHGKLRSQVEAKDDGIVIDGHFIPCVSVRNPAELPWGKLGADYVVESTGLFTDSEGASKHLQAGAKRVIISAPTKDPDRVRTLLVGVNHDLFDPSKDVIVSNASCTTNCLAPIAKVINDNFGLTEGLMTTVHAMTATQPTVDGPSKKDWRGGRGAAQNIIPSSTGAAKAVALVLPELKGKLTGMAFRVPTPDVSVVDLTFKTAKATSYKEICAAMKQASEGSLAGILGYTDEEVVSTDFQGDTHSSIFDAGAGIELNSNFFKVVAWYDNEWGYSNRVVDLMLSMIQKEQLAAV</sequence>
<feature type="initiator methionine" description="Removed" evidence="1">
    <location>
        <position position="1"/>
    </location>
</feature>
<feature type="chain" id="PRO_0000145624" description="Glyceraldehyde-3-phosphate dehydrogenase 1">
    <location>
        <begin position="2"/>
        <end position="343"/>
    </location>
</feature>
<feature type="active site" description="Nucleophile" evidence="2">
    <location>
        <position position="155"/>
    </location>
</feature>
<feature type="binding site" evidence="2">
    <location>
        <begin position="13"/>
        <end position="14"/>
    </location>
    <ligand>
        <name>NAD(+)</name>
        <dbReference type="ChEBI" id="CHEBI:57540"/>
    </ligand>
</feature>
<feature type="binding site" evidence="2">
    <location>
        <position position="35"/>
    </location>
    <ligand>
        <name>NAD(+)</name>
        <dbReference type="ChEBI" id="CHEBI:57540"/>
    </ligand>
</feature>
<feature type="binding site" evidence="2">
    <location>
        <position position="79"/>
    </location>
    <ligand>
        <name>NAD(+)</name>
        <dbReference type="ChEBI" id="CHEBI:57540"/>
    </ligand>
</feature>
<feature type="binding site" evidence="2">
    <location>
        <position position="121"/>
    </location>
    <ligand>
        <name>NAD(+)</name>
        <dbReference type="ChEBI" id="CHEBI:57540"/>
    </ligand>
</feature>
<feature type="binding site" evidence="2">
    <location>
        <begin position="154"/>
        <end position="156"/>
    </location>
    <ligand>
        <name>D-glyceraldehyde 3-phosphate</name>
        <dbReference type="ChEBI" id="CHEBI:59776"/>
    </ligand>
</feature>
<feature type="binding site" evidence="2">
    <location>
        <position position="185"/>
    </location>
    <ligand>
        <name>D-glyceraldehyde 3-phosphate</name>
        <dbReference type="ChEBI" id="CHEBI:59776"/>
    </ligand>
</feature>
<feature type="binding site" evidence="2">
    <location>
        <begin position="214"/>
        <end position="215"/>
    </location>
    <ligand>
        <name>D-glyceraldehyde 3-phosphate</name>
        <dbReference type="ChEBI" id="CHEBI:59776"/>
    </ligand>
</feature>
<feature type="binding site" evidence="2">
    <location>
        <position position="237"/>
    </location>
    <ligand>
        <name>D-glyceraldehyde 3-phosphate</name>
        <dbReference type="ChEBI" id="CHEBI:59776"/>
    </ligand>
</feature>
<feature type="binding site" evidence="2">
    <location>
        <position position="319"/>
    </location>
    <ligand>
        <name>NAD(+)</name>
        <dbReference type="ChEBI" id="CHEBI:57540"/>
    </ligand>
</feature>
<feature type="site" description="Activates thiol group during catalysis" evidence="5">
    <location>
        <position position="182"/>
    </location>
</feature>
<feature type="sequence conflict" description="In Ref. 1; AAA21995." evidence="6" ref="1">
    <original>T</original>
    <variation>I</variation>
    <location>
        <position position="240"/>
    </location>
</feature>
<comment type="function">
    <text evidence="4">Catalyzes the oxidative phosphorylation of glyceraldehyde 3-phosphate (G3P) to 1,3-bisphosphoglycerate (BPG) using the cofactor NAD. The first reaction step involves the formation of a hemiacetal intermediate between G3P and a cysteine residue, and this hemiacetal intermediate is then oxidized to a thioester, with concomitant reduction of NAD to NADH. The reduced NADH is then exchanged with the second NAD, and the thioester is attacked by a nucleophilic inorganic phosphate to produce BPG.</text>
</comment>
<comment type="catalytic activity">
    <reaction evidence="3">
        <text>D-glyceraldehyde 3-phosphate + phosphate + NAD(+) = (2R)-3-phospho-glyceroyl phosphate + NADH + H(+)</text>
        <dbReference type="Rhea" id="RHEA:10300"/>
        <dbReference type="ChEBI" id="CHEBI:15378"/>
        <dbReference type="ChEBI" id="CHEBI:43474"/>
        <dbReference type="ChEBI" id="CHEBI:57540"/>
        <dbReference type="ChEBI" id="CHEBI:57604"/>
        <dbReference type="ChEBI" id="CHEBI:57945"/>
        <dbReference type="ChEBI" id="CHEBI:59776"/>
        <dbReference type="EC" id="1.2.1.12"/>
    </reaction>
</comment>
<comment type="pathway">
    <text evidence="6">Carbohydrate degradation; glycolysis; pyruvate from D-glyceraldehyde 3-phosphate: step 1/5.</text>
</comment>
<comment type="subunit">
    <text evidence="4">Homotetramer.</text>
</comment>
<comment type="subcellular location">
    <subcellularLocation>
        <location evidence="6">Cytoplasm</location>
    </subcellularLocation>
</comment>
<comment type="similarity">
    <text evidence="6">Belongs to the glyceraldehyde-3-phosphate dehydrogenase family.</text>
</comment>